<evidence type="ECO:0000255" key="1">
    <source>
        <dbReference type="HAMAP-Rule" id="MF_01302"/>
    </source>
</evidence>
<evidence type="ECO:0000305" key="2"/>
<comment type="function">
    <text evidence="1">One of the primary rRNA binding proteins, it binds directly to 16S rRNA central domain where it helps coordinate assembly of the platform of the 30S subunit.</text>
</comment>
<comment type="subunit">
    <text evidence="1">Part of the 30S ribosomal subunit. Contacts proteins S5 and S12.</text>
</comment>
<comment type="similarity">
    <text evidence="1">Belongs to the universal ribosomal protein uS8 family.</text>
</comment>
<proteinExistence type="inferred from homology"/>
<gene>
    <name evidence="1" type="primary">rpsH1</name>
    <name type="ordered locus">LBL_0427</name>
</gene>
<gene>
    <name evidence="1" type="primary">rpsH</name>
    <name type="ordered locus">LBL_0467</name>
</gene>
<sequence length="133" mass="15168">MSMSDPIGDMLTRIRNAGRAKHDTCLVPGSKIKKSILDLMKEEGFIRDYESVKVNETFEDYKVFLKYDQTKRPIIRELIRVSTPGRRVYIKSTEIRPYKNNIGTLIVSTSKGIMTGKNARKLKLGGEVILKMS</sequence>
<dbReference type="EMBL" id="CP000348">
    <property type="protein sequence ID" value="ABJ78025.1"/>
    <property type="molecule type" value="Genomic_DNA"/>
</dbReference>
<dbReference type="EMBL" id="CP000348">
    <property type="protein sequence ID" value="ABJ78065.1"/>
    <property type="molecule type" value="Genomic_DNA"/>
</dbReference>
<dbReference type="RefSeq" id="WP_011669438.1">
    <property type="nucleotide sequence ID" value="NC_008508.1"/>
</dbReference>
<dbReference type="SMR" id="Q055D0"/>
<dbReference type="KEGG" id="lbl:LBL_0427"/>
<dbReference type="KEGG" id="lbl:LBL_0467"/>
<dbReference type="PATRIC" id="fig|355276.3.peg.573"/>
<dbReference type="HOGENOM" id="CLU_098428_0_2_12"/>
<dbReference type="GO" id="GO:1990904">
    <property type="term" value="C:ribonucleoprotein complex"/>
    <property type="evidence" value="ECO:0007669"/>
    <property type="project" value="UniProtKB-KW"/>
</dbReference>
<dbReference type="GO" id="GO:0005840">
    <property type="term" value="C:ribosome"/>
    <property type="evidence" value="ECO:0007669"/>
    <property type="project" value="UniProtKB-KW"/>
</dbReference>
<dbReference type="GO" id="GO:0019843">
    <property type="term" value="F:rRNA binding"/>
    <property type="evidence" value="ECO:0007669"/>
    <property type="project" value="UniProtKB-UniRule"/>
</dbReference>
<dbReference type="GO" id="GO:0003735">
    <property type="term" value="F:structural constituent of ribosome"/>
    <property type="evidence" value="ECO:0007669"/>
    <property type="project" value="InterPro"/>
</dbReference>
<dbReference type="GO" id="GO:0006412">
    <property type="term" value="P:translation"/>
    <property type="evidence" value="ECO:0007669"/>
    <property type="project" value="UniProtKB-UniRule"/>
</dbReference>
<dbReference type="FunFam" id="3.30.1370.30:FF:000002">
    <property type="entry name" value="30S ribosomal protein S8"/>
    <property type="match status" value="1"/>
</dbReference>
<dbReference type="FunFam" id="3.30.1490.10:FF:000001">
    <property type="entry name" value="30S ribosomal protein S8"/>
    <property type="match status" value="1"/>
</dbReference>
<dbReference type="Gene3D" id="3.30.1370.30">
    <property type="match status" value="1"/>
</dbReference>
<dbReference type="Gene3D" id="3.30.1490.10">
    <property type="match status" value="1"/>
</dbReference>
<dbReference type="HAMAP" id="MF_01302_B">
    <property type="entry name" value="Ribosomal_uS8_B"/>
    <property type="match status" value="1"/>
</dbReference>
<dbReference type="InterPro" id="IPR000630">
    <property type="entry name" value="Ribosomal_uS8"/>
</dbReference>
<dbReference type="InterPro" id="IPR047863">
    <property type="entry name" value="Ribosomal_uS8_CS"/>
</dbReference>
<dbReference type="InterPro" id="IPR035987">
    <property type="entry name" value="Ribosomal_uS8_sf"/>
</dbReference>
<dbReference type="NCBIfam" id="NF001109">
    <property type="entry name" value="PRK00136.1"/>
    <property type="match status" value="1"/>
</dbReference>
<dbReference type="PANTHER" id="PTHR11758">
    <property type="entry name" value="40S RIBOSOMAL PROTEIN S15A"/>
    <property type="match status" value="1"/>
</dbReference>
<dbReference type="Pfam" id="PF00410">
    <property type="entry name" value="Ribosomal_S8"/>
    <property type="match status" value="1"/>
</dbReference>
<dbReference type="SUPFAM" id="SSF56047">
    <property type="entry name" value="Ribosomal protein S8"/>
    <property type="match status" value="1"/>
</dbReference>
<dbReference type="PROSITE" id="PS00053">
    <property type="entry name" value="RIBOSOMAL_S8"/>
    <property type="match status" value="1"/>
</dbReference>
<protein>
    <recommendedName>
        <fullName evidence="1">Small ribosomal subunit protein uS8</fullName>
    </recommendedName>
    <alternativeName>
        <fullName evidence="2">30S ribosomal protein S8</fullName>
    </alternativeName>
</protein>
<name>RS8_LEPBL</name>
<feature type="chain" id="PRO_0000290867" description="Small ribosomal subunit protein uS8">
    <location>
        <begin position="1"/>
        <end position="133"/>
    </location>
</feature>
<organism>
    <name type="scientific">Leptospira borgpetersenii serovar Hardjo-bovis (strain L550)</name>
    <dbReference type="NCBI Taxonomy" id="355276"/>
    <lineage>
        <taxon>Bacteria</taxon>
        <taxon>Pseudomonadati</taxon>
        <taxon>Spirochaetota</taxon>
        <taxon>Spirochaetia</taxon>
        <taxon>Leptospirales</taxon>
        <taxon>Leptospiraceae</taxon>
        <taxon>Leptospira</taxon>
    </lineage>
</organism>
<reference key="1">
    <citation type="journal article" date="2006" name="Proc. Natl. Acad. Sci. U.S.A.">
        <title>Genome reduction in Leptospira borgpetersenii reflects limited transmission potential.</title>
        <authorList>
            <person name="Bulach D.M."/>
            <person name="Zuerner R.L."/>
            <person name="Wilson P."/>
            <person name="Seemann T."/>
            <person name="McGrath A."/>
            <person name="Cullen P.A."/>
            <person name="Davis J."/>
            <person name="Johnson M."/>
            <person name="Kuczek E."/>
            <person name="Alt D.P."/>
            <person name="Peterson-Burch B."/>
            <person name="Coppel R.L."/>
            <person name="Rood J.I."/>
            <person name="Davies J.K."/>
            <person name="Adler B."/>
        </authorList>
    </citation>
    <scope>NUCLEOTIDE SEQUENCE [LARGE SCALE GENOMIC DNA]</scope>
    <source>
        <strain>L550</strain>
    </source>
</reference>
<accession>Q055D0</accession>
<keyword id="KW-0687">Ribonucleoprotein</keyword>
<keyword id="KW-0689">Ribosomal protein</keyword>
<keyword id="KW-0694">RNA-binding</keyword>
<keyword id="KW-0699">rRNA-binding</keyword>